<proteinExistence type="inferred from homology"/>
<gene>
    <name evidence="1" type="primary">alaS</name>
    <name type="ordered locus">DET0050</name>
</gene>
<evidence type="ECO:0000255" key="1">
    <source>
        <dbReference type="HAMAP-Rule" id="MF_00036"/>
    </source>
</evidence>
<keyword id="KW-0030">Aminoacyl-tRNA synthetase</keyword>
<keyword id="KW-0067">ATP-binding</keyword>
<keyword id="KW-0963">Cytoplasm</keyword>
<keyword id="KW-0436">Ligase</keyword>
<keyword id="KW-0479">Metal-binding</keyword>
<keyword id="KW-0547">Nucleotide-binding</keyword>
<keyword id="KW-0648">Protein biosynthesis</keyword>
<keyword id="KW-0694">RNA-binding</keyword>
<keyword id="KW-0820">tRNA-binding</keyword>
<keyword id="KW-0862">Zinc</keyword>
<comment type="function">
    <text evidence="1">Catalyzes the attachment of alanine to tRNA(Ala) in a two-step reaction: alanine is first activated by ATP to form Ala-AMP and then transferred to the acceptor end of tRNA(Ala). Also edits incorrectly charged Ser-tRNA(Ala) and Gly-tRNA(Ala) via its editing domain.</text>
</comment>
<comment type="catalytic activity">
    <reaction evidence="1">
        <text>tRNA(Ala) + L-alanine + ATP = L-alanyl-tRNA(Ala) + AMP + diphosphate</text>
        <dbReference type="Rhea" id="RHEA:12540"/>
        <dbReference type="Rhea" id="RHEA-COMP:9657"/>
        <dbReference type="Rhea" id="RHEA-COMP:9923"/>
        <dbReference type="ChEBI" id="CHEBI:30616"/>
        <dbReference type="ChEBI" id="CHEBI:33019"/>
        <dbReference type="ChEBI" id="CHEBI:57972"/>
        <dbReference type="ChEBI" id="CHEBI:78442"/>
        <dbReference type="ChEBI" id="CHEBI:78497"/>
        <dbReference type="ChEBI" id="CHEBI:456215"/>
        <dbReference type="EC" id="6.1.1.7"/>
    </reaction>
</comment>
<comment type="cofactor">
    <cofactor evidence="1">
        <name>Zn(2+)</name>
        <dbReference type="ChEBI" id="CHEBI:29105"/>
    </cofactor>
    <text evidence="1">Binds 1 zinc ion per subunit.</text>
</comment>
<comment type="subcellular location">
    <subcellularLocation>
        <location evidence="1">Cytoplasm</location>
    </subcellularLocation>
</comment>
<comment type="domain">
    <text evidence="1">Consists of three domains; the N-terminal catalytic domain, the editing domain and the C-terminal C-Ala domain. The editing domain removes incorrectly charged amino acids, while the C-Ala domain, along with tRNA(Ala), serves as a bridge to cooperatively bring together the editing and aminoacylation centers thus stimulating deacylation of misacylated tRNAs.</text>
</comment>
<comment type="similarity">
    <text evidence="1">Belongs to the class-II aminoacyl-tRNA synthetase family.</text>
</comment>
<dbReference type="EC" id="6.1.1.7" evidence="1"/>
<dbReference type="EMBL" id="CP000027">
    <property type="protein sequence ID" value="AAW39097.1"/>
    <property type="molecule type" value="Genomic_DNA"/>
</dbReference>
<dbReference type="RefSeq" id="WP_010935860.1">
    <property type="nucleotide sequence ID" value="NC_002936.3"/>
</dbReference>
<dbReference type="SMR" id="Q3ZAE4"/>
<dbReference type="FunCoup" id="Q3ZAE4">
    <property type="interactions" value="363"/>
</dbReference>
<dbReference type="STRING" id="243164.DET0050"/>
<dbReference type="GeneID" id="3229054"/>
<dbReference type="KEGG" id="det:DET0050"/>
<dbReference type="PATRIC" id="fig|243164.10.peg.49"/>
<dbReference type="eggNOG" id="COG0013">
    <property type="taxonomic scope" value="Bacteria"/>
</dbReference>
<dbReference type="HOGENOM" id="CLU_004485_1_1_0"/>
<dbReference type="InParanoid" id="Q3ZAE4"/>
<dbReference type="Proteomes" id="UP000008289">
    <property type="component" value="Chromosome"/>
</dbReference>
<dbReference type="GO" id="GO:0005829">
    <property type="term" value="C:cytosol"/>
    <property type="evidence" value="ECO:0007669"/>
    <property type="project" value="TreeGrafter"/>
</dbReference>
<dbReference type="GO" id="GO:0004813">
    <property type="term" value="F:alanine-tRNA ligase activity"/>
    <property type="evidence" value="ECO:0007669"/>
    <property type="project" value="UniProtKB-UniRule"/>
</dbReference>
<dbReference type="GO" id="GO:0002161">
    <property type="term" value="F:aminoacyl-tRNA deacylase activity"/>
    <property type="evidence" value="ECO:0007669"/>
    <property type="project" value="TreeGrafter"/>
</dbReference>
<dbReference type="GO" id="GO:0005524">
    <property type="term" value="F:ATP binding"/>
    <property type="evidence" value="ECO:0007669"/>
    <property type="project" value="UniProtKB-UniRule"/>
</dbReference>
<dbReference type="GO" id="GO:0000049">
    <property type="term" value="F:tRNA binding"/>
    <property type="evidence" value="ECO:0007669"/>
    <property type="project" value="UniProtKB-KW"/>
</dbReference>
<dbReference type="GO" id="GO:0008270">
    <property type="term" value="F:zinc ion binding"/>
    <property type="evidence" value="ECO:0007669"/>
    <property type="project" value="UniProtKB-UniRule"/>
</dbReference>
<dbReference type="GO" id="GO:0006419">
    <property type="term" value="P:alanyl-tRNA aminoacylation"/>
    <property type="evidence" value="ECO:0007669"/>
    <property type="project" value="UniProtKB-UniRule"/>
</dbReference>
<dbReference type="CDD" id="cd00673">
    <property type="entry name" value="AlaRS_core"/>
    <property type="match status" value="1"/>
</dbReference>
<dbReference type="FunFam" id="2.40.30.130:FF:000001">
    <property type="entry name" value="Alanine--tRNA ligase"/>
    <property type="match status" value="1"/>
</dbReference>
<dbReference type="FunFam" id="3.10.310.40:FF:000001">
    <property type="entry name" value="Alanine--tRNA ligase"/>
    <property type="match status" value="1"/>
</dbReference>
<dbReference type="FunFam" id="3.30.930.10:FF:000004">
    <property type="entry name" value="Alanine--tRNA ligase"/>
    <property type="match status" value="1"/>
</dbReference>
<dbReference type="FunFam" id="3.30.980.10:FF:000004">
    <property type="entry name" value="Alanine--tRNA ligase, cytoplasmic"/>
    <property type="match status" value="1"/>
</dbReference>
<dbReference type="Gene3D" id="2.40.30.130">
    <property type="match status" value="1"/>
</dbReference>
<dbReference type="Gene3D" id="3.10.310.40">
    <property type="match status" value="1"/>
</dbReference>
<dbReference type="Gene3D" id="3.30.54.20">
    <property type="match status" value="1"/>
</dbReference>
<dbReference type="Gene3D" id="6.10.250.550">
    <property type="match status" value="1"/>
</dbReference>
<dbReference type="Gene3D" id="3.30.930.10">
    <property type="entry name" value="Bira Bifunctional Protein, Domain 2"/>
    <property type="match status" value="1"/>
</dbReference>
<dbReference type="Gene3D" id="3.30.980.10">
    <property type="entry name" value="Threonyl-trna Synthetase, Chain A, domain 2"/>
    <property type="match status" value="1"/>
</dbReference>
<dbReference type="HAMAP" id="MF_00036_B">
    <property type="entry name" value="Ala_tRNA_synth_B"/>
    <property type="match status" value="1"/>
</dbReference>
<dbReference type="InterPro" id="IPR045864">
    <property type="entry name" value="aa-tRNA-synth_II/BPL/LPL"/>
</dbReference>
<dbReference type="InterPro" id="IPR002318">
    <property type="entry name" value="Ala-tRNA-lgiase_IIc"/>
</dbReference>
<dbReference type="InterPro" id="IPR018162">
    <property type="entry name" value="Ala-tRNA-ligase_IIc_anticod-bd"/>
</dbReference>
<dbReference type="InterPro" id="IPR018165">
    <property type="entry name" value="Ala-tRNA-synth_IIc_core"/>
</dbReference>
<dbReference type="InterPro" id="IPR018164">
    <property type="entry name" value="Ala-tRNA-synth_IIc_N"/>
</dbReference>
<dbReference type="InterPro" id="IPR050058">
    <property type="entry name" value="Ala-tRNA_ligase"/>
</dbReference>
<dbReference type="InterPro" id="IPR023033">
    <property type="entry name" value="Ala_tRNA_ligase_euk/bac"/>
</dbReference>
<dbReference type="InterPro" id="IPR003156">
    <property type="entry name" value="DHHA1_dom"/>
</dbReference>
<dbReference type="InterPro" id="IPR018163">
    <property type="entry name" value="Thr/Ala-tRNA-synth_IIc_edit"/>
</dbReference>
<dbReference type="InterPro" id="IPR009000">
    <property type="entry name" value="Transl_B-barrel_sf"/>
</dbReference>
<dbReference type="InterPro" id="IPR012947">
    <property type="entry name" value="tRNA_SAD"/>
</dbReference>
<dbReference type="NCBIfam" id="TIGR00344">
    <property type="entry name" value="alaS"/>
    <property type="match status" value="1"/>
</dbReference>
<dbReference type="PANTHER" id="PTHR11777:SF9">
    <property type="entry name" value="ALANINE--TRNA LIGASE, CYTOPLASMIC"/>
    <property type="match status" value="1"/>
</dbReference>
<dbReference type="PANTHER" id="PTHR11777">
    <property type="entry name" value="ALANYL-TRNA SYNTHETASE"/>
    <property type="match status" value="1"/>
</dbReference>
<dbReference type="Pfam" id="PF02272">
    <property type="entry name" value="DHHA1"/>
    <property type="match status" value="1"/>
</dbReference>
<dbReference type="Pfam" id="PF01411">
    <property type="entry name" value="tRNA-synt_2c"/>
    <property type="match status" value="1"/>
</dbReference>
<dbReference type="Pfam" id="PF07973">
    <property type="entry name" value="tRNA_SAD"/>
    <property type="match status" value="1"/>
</dbReference>
<dbReference type="PRINTS" id="PR00980">
    <property type="entry name" value="TRNASYNTHALA"/>
</dbReference>
<dbReference type="SMART" id="SM00863">
    <property type="entry name" value="tRNA_SAD"/>
    <property type="match status" value="1"/>
</dbReference>
<dbReference type="SUPFAM" id="SSF55681">
    <property type="entry name" value="Class II aaRS and biotin synthetases"/>
    <property type="match status" value="1"/>
</dbReference>
<dbReference type="SUPFAM" id="SSF101353">
    <property type="entry name" value="Putative anticodon-binding domain of alanyl-tRNA synthetase (AlaRS)"/>
    <property type="match status" value="1"/>
</dbReference>
<dbReference type="SUPFAM" id="SSF55186">
    <property type="entry name" value="ThrRS/AlaRS common domain"/>
    <property type="match status" value="1"/>
</dbReference>
<dbReference type="SUPFAM" id="SSF50447">
    <property type="entry name" value="Translation proteins"/>
    <property type="match status" value="1"/>
</dbReference>
<dbReference type="PROSITE" id="PS50860">
    <property type="entry name" value="AA_TRNA_LIGASE_II_ALA"/>
    <property type="match status" value="1"/>
</dbReference>
<organism>
    <name type="scientific">Dehalococcoides mccartyi (strain ATCC BAA-2266 / KCTC 15142 / 195)</name>
    <name type="common">Dehalococcoides ethenogenes (strain 195)</name>
    <dbReference type="NCBI Taxonomy" id="243164"/>
    <lineage>
        <taxon>Bacteria</taxon>
        <taxon>Bacillati</taxon>
        <taxon>Chloroflexota</taxon>
        <taxon>Dehalococcoidia</taxon>
        <taxon>Dehalococcoidales</taxon>
        <taxon>Dehalococcoidaceae</taxon>
        <taxon>Dehalococcoides</taxon>
    </lineage>
</organism>
<accession>Q3ZAE4</accession>
<reference key="1">
    <citation type="journal article" date="2005" name="Science">
        <title>Genome sequence of the PCE-dechlorinating bacterium Dehalococcoides ethenogenes.</title>
        <authorList>
            <person name="Seshadri R."/>
            <person name="Adrian L."/>
            <person name="Fouts D.E."/>
            <person name="Eisen J.A."/>
            <person name="Phillippy A.M."/>
            <person name="Methe B.A."/>
            <person name="Ward N.L."/>
            <person name="Nelson W.C."/>
            <person name="DeBoy R.T."/>
            <person name="Khouri H.M."/>
            <person name="Kolonay J.F."/>
            <person name="Dodson R.J."/>
            <person name="Daugherty S.C."/>
            <person name="Brinkac L.M."/>
            <person name="Sullivan S.A."/>
            <person name="Madupu R."/>
            <person name="Nelson K.E."/>
            <person name="Kang K.H."/>
            <person name="Impraim M."/>
            <person name="Tran K."/>
            <person name="Robinson J.M."/>
            <person name="Forberger H.A."/>
            <person name="Fraser C.M."/>
            <person name="Zinder S.H."/>
            <person name="Heidelberg J.F."/>
        </authorList>
    </citation>
    <scope>NUCLEOTIDE SEQUENCE [LARGE SCALE GENOMIC DNA]</scope>
    <source>
        <strain>ATCC BAA-2266 / KCTC 15142 / 195</strain>
    </source>
</reference>
<name>SYA_DEHM1</name>
<sequence length="871" mass="96381">MFSSDELRENYLKFFEEKGHKRIASSSLIPHNDPTLLLTTAGMVQFKPYYLGVAKPENSRMTSCQKCFRTTDIESVGDASHLTMFEMLGNFSIGNYFKKEAIAWAWEYVTQRLNIPAEKLWVTVYLDDDEAIALWKEQGVPEGRIVRLGAADNFWGPAGDSGPCGPCSEIHYDFGQEMGCGKADCNPSCKCGRFCEIWNLVFVQFNQDKSGKRQNLPAPSIDTGMGLERLTILMQFRKNVYETDIFAPVIEKACQLSGRQYGIDAETDKALRIVSEHSRGITFLIADGVIPDKAGRGYVLRRLLRRAVLFGRRLGLEKPFLVDMAGAVIARMSGIYPELNKRQAYVLEMIASEEARFSETLATGLELLEEIVRQTKGGQISGQDAFKLYDTYGFPVEMTTEIAAERGLSVDLGGFEAEMEVQRTKARSSRKFSFDAAATAEAVKNMRHGEKTCFVGYELTRQKSTIMDILTEGGSVDSIEEGDEASIVLDESPFYAEMGGQVGDTGEIITGGGRFEVKNTLHLPNGVFLHQGRVISGCLKIAETAAAHIDEERRRDIARNHTATHILQTALRQVLGEQVQQRGSVVTPERLRFDFSHLKPMTKDEIRRAEEFVNDKIRRNLPVYAEEMPYRHALEEGVTALFGEKYGDRVRVLRVGRPAVSAELCGGTHVSASGEISLFKIVSESSVGAGLRRIEAVTGREAEAYINLQQDSLSELSGMLEAAPEESPRKLAELKEEIDTLKKTVQNLERQMSRGEAEELLSKAEDYKGIKLLVSRMTSVNADTLHETADFLRDKLGSGIIVLGTVSEDKPFFLCMVTPDLIEKGYHAGNIVKKLSQIAGGGGGGKPNMAQGGGRDKAKLDEALQAVKGML</sequence>
<protein>
    <recommendedName>
        <fullName evidence="1">Alanine--tRNA ligase</fullName>
        <ecNumber evidence="1">6.1.1.7</ecNumber>
    </recommendedName>
    <alternativeName>
        <fullName evidence="1">Alanyl-tRNA synthetase</fullName>
        <shortName evidence="1">AlaRS</shortName>
    </alternativeName>
</protein>
<feature type="chain" id="PRO_0000075103" description="Alanine--tRNA ligase">
    <location>
        <begin position="1"/>
        <end position="871"/>
    </location>
</feature>
<feature type="binding site" evidence="1">
    <location>
        <position position="561"/>
    </location>
    <ligand>
        <name>Zn(2+)</name>
        <dbReference type="ChEBI" id="CHEBI:29105"/>
    </ligand>
</feature>
<feature type="binding site" evidence="1">
    <location>
        <position position="565"/>
    </location>
    <ligand>
        <name>Zn(2+)</name>
        <dbReference type="ChEBI" id="CHEBI:29105"/>
    </ligand>
</feature>
<feature type="binding site" evidence="1">
    <location>
        <position position="665"/>
    </location>
    <ligand>
        <name>Zn(2+)</name>
        <dbReference type="ChEBI" id="CHEBI:29105"/>
    </ligand>
</feature>
<feature type="binding site" evidence="1">
    <location>
        <position position="669"/>
    </location>
    <ligand>
        <name>Zn(2+)</name>
        <dbReference type="ChEBI" id="CHEBI:29105"/>
    </ligand>
</feature>